<feature type="chain" id="PRO_0000103996" description="Uncharacterized protein Mb2292c">
    <location>
        <begin position="1"/>
        <end position="110"/>
    </location>
</feature>
<gene>
    <name type="ordered locus">BQ2027_MB2292C</name>
</gene>
<name>Y2292_MYCBO</name>
<protein>
    <recommendedName>
        <fullName>Uncharacterized protein Mb2292c</fullName>
    </recommendedName>
</protein>
<evidence type="ECO:0000250" key="1">
    <source>
        <dbReference type="UniProtKB" id="P9WLF9"/>
    </source>
</evidence>
<keyword id="KW-1185">Reference proteome</keyword>
<sequence>MANDARPLARLANCRVGDQSSATHAYTVGPVLGVPPTGGVDLRYGGRAGIGRSETVTDHGAVGRRYHQPCAGQIRLSELRVTILLRCETLCETAQLLRCPPLPCDCSTPL</sequence>
<reference key="1">
    <citation type="journal article" date="2003" name="Proc. Natl. Acad. Sci. U.S.A.">
        <title>The complete genome sequence of Mycobacterium bovis.</title>
        <authorList>
            <person name="Garnier T."/>
            <person name="Eiglmeier K."/>
            <person name="Camus J.-C."/>
            <person name="Medina N."/>
            <person name="Mansoor H."/>
            <person name="Pryor M."/>
            <person name="Duthoy S."/>
            <person name="Grondin S."/>
            <person name="Lacroix C."/>
            <person name="Monsempe C."/>
            <person name="Simon S."/>
            <person name="Harris B."/>
            <person name="Atkin R."/>
            <person name="Doggett J."/>
            <person name="Mayes R."/>
            <person name="Keating L."/>
            <person name="Wheeler P.R."/>
            <person name="Parkhill J."/>
            <person name="Barrell B.G."/>
            <person name="Cole S.T."/>
            <person name="Gordon S.V."/>
            <person name="Hewinson R.G."/>
        </authorList>
    </citation>
    <scope>NUCLEOTIDE SEQUENCE [LARGE SCALE GENOMIC DNA]</scope>
    <source>
        <strain>ATCC BAA-935 / AF2122/97</strain>
    </source>
</reference>
<reference key="2">
    <citation type="journal article" date="2017" name="Genome Announc.">
        <title>Updated reference genome sequence and annotation of Mycobacterium bovis AF2122/97.</title>
        <authorList>
            <person name="Malone K.M."/>
            <person name="Farrell D."/>
            <person name="Stuber T.P."/>
            <person name="Schubert O.T."/>
            <person name="Aebersold R."/>
            <person name="Robbe-Austerman S."/>
            <person name="Gordon S.V."/>
        </authorList>
    </citation>
    <scope>NUCLEOTIDE SEQUENCE [LARGE SCALE GENOMIC DNA]</scope>
    <scope>GENOME REANNOTATION</scope>
    <source>
        <strain>ATCC BAA-935 / AF2122/97</strain>
    </source>
</reference>
<dbReference type="EMBL" id="LT708304">
    <property type="protein sequence ID" value="SIU00903.1"/>
    <property type="molecule type" value="Genomic_DNA"/>
</dbReference>
<dbReference type="RefSeq" id="NP_855941.1">
    <property type="nucleotide sequence ID" value="NC_002945.3"/>
</dbReference>
<dbReference type="RefSeq" id="WP_003902155.1">
    <property type="nucleotide sequence ID" value="NC_002945.4"/>
</dbReference>
<dbReference type="KEGG" id="mbo:BQ2027_MB2292C"/>
<dbReference type="Proteomes" id="UP000001419">
    <property type="component" value="Chromosome"/>
</dbReference>
<accession>P64966</accession>
<accession>A0A1R3Y0P1</accession>
<accession>Q50694</accession>
<accession>X2BKC5</accession>
<proteinExistence type="inferred from homology"/>
<organism>
    <name type="scientific">Mycobacterium bovis (strain ATCC BAA-935 / AF2122/97)</name>
    <dbReference type="NCBI Taxonomy" id="233413"/>
    <lineage>
        <taxon>Bacteria</taxon>
        <taxon>Bacillati</taxon>
        <taxon>Actinomycetota</taxon>
        <taxon>Actinomycetes</taxon>
        <taxon>Mycobacteriales</taxon>
        <taxon>Mycobacteriaceae</taxon>
        <taxon>Mycobacterium</taxon>
        <taxon>Mycobacterium tuberculosis complex</taxon>
    </lineage>
</organism>
<comment type="function">
    <text evidence="1">May play a regulatory role in sulfomenaquinone (SMK) biosynthesis.</text>
</comment>